<reference key="1">
    <citation type="journal article" date="2007" name="PLoS Genet.">
        <title>Genome analysis of Minibacterium massiliensis highlights the convergent evolution of water-living bacteria.</title>
        <authorList>
            <person name="Audic S."/>
            <person name="Robert C."/>
            <person name="Campagna B."/>
            <person name="Parinello H."/>
            <person name="Claverie J.-M."/>
            <person name="Raoult D."/>
            <person name="Drancourt M."/>
        </authorList>
    </citation>
    <scope>NUCLEOTIDE SEQUENCE [LARGE SCALE GENOMIC DNA]</scope>
    <source>
        <strain>Marseille</strain>
    </source>
</reference>
<sequence length="145" mass="15266">MAKNILLLNGPNLNLLGSREPEVYGATTLADVERAASEQVAQAGAKLTTFQSNHEGALIDRIQAAKKEGIDAIVINPGGLTHTSVSLRDALAAVAIPFVEIHVSNIHQREAFRHHSYLSGIAVGVICGLGTEGYAAAISFALKKL</sequence>
<feature type="chain" id="PRO_1000023479" description="3-dehydroquinate dehydratase">
    <location>
        <begin position="1"/>
        <end position="145"/>
    </location>
</feature>
<feature type="active site" description="Proton acceptor" evidence="1">
    <location>
        <position position="24"/>
    </location>
</feature>
<feature type="active site" description="Proton donor" evidence="1">
    <location>
        <position position="102"/>
    </location>
</feature>
<feature type="binding site" evidence="1">
    <location>
        <position position="76"/>
    </location>
    <ligand>
        <name>substrate</name>
    </ligand>
</feature>
<feature type="binding site" evidence="1">
    <location>
        <position position="82"/>
    </location>
    <ligand>
        <name>substrate</name>
    </ligand>
</feature>
<feature type="binding site" evidence="1">
    <location>
        <position position="89"/>
    </location>
    <ligand>
        <name>substrate</name>
    </ligand>
</feature>
<feature type="binding site" evidence="1">
    <location>
        <begin position="103"/>
        <end position="104"/>
    </location>
    <ligand>
        <name>substrate</name>
    </ligand>
</feature>
<feature type="binding site" evidence="1">
    <location>
        <position position="113"/>
    </location>
    <ligand>
        <name>substrate</name>
    </ligand>
</feature>
<feature type="site" description="Transition state stabilizer" evidence="1">
    <location>
        <position position="19"/>
    </location>
</feature>
<protein>
    <recommendedName>
        <fullName evidence="1">3-dehydroquinate dehydratase</fullName>
        <shortName evidence="1">3-dehydroquinase</shortName>
        <ecNumber evidence="1">4.2.1.10</ecNumber>
    </recommendedName>
    <alternativeName>
        <fullName evidence="1">Type II DHQase</fullName>
    </alternativeName>
</protein>
<evidence type="ECO:0000255" key="1">
    <source>
        <dbReference type="HAMAP-Rule" id="MF_00169"/>
    </source>
</evidence>
<proteinExistence type="inferred from homology"/>
<name>AROQ_JANMA</name>
<organism>
    <name type="scientific">Janthinobacterium sp. (strain Marseille)</name>
    <name type="common">Minibacterium massiliensis</name>
    <dbReference type="NCBI Taxonomy" id="375286"/>
    <lineage>
        <taxon>Bacteria</taxon>
        <taxon>Pseudomonadati</taxon>
        <taxon>Pseudomonadota</taxon>
        <taxon>Betaproteobacteria</taxon>
        <taxon>Burkholderiales</taxon>
        <taxon>Oxalobacteraceae</taxon>
        <taxon>Janthinobacterium</taxon>
    </lineage>
</organism>
<comment type="function">
    <text evidence="1">Catalyzes a trans-dehydration via an enolate intermediate.</text>
</comment>
<comment type="catalytic activity">
    <reaction evidence="1">
        <text>3-dehydroquinate = 3-dehydroshikimate + H2O</text>
        <dbReference type="Rhea" id="RHEA:21096"/>
        <dbReference type="ChEBI" id="CHEBI:15377"/>
        <dbReference type="ChEBI" id="CHEBI:16630"/>
        <dbReference type="ChEBI" id="CHEBI:32364"/>
        <dbReference type="EC" id="4.2.1.10"/>
    </reaction>
</comment>
<comment type="pathway">
    <text evidence="1">Metabolic intermediate biosynthesis; chorismate biosynthesis; chorismate from D-erythrose 4-phosphate and phosphoenolpyruvate: step 3/7.</text>
</comment>
<comment type="subunit">
    <text evidence="1">Homododecamer.</text>
</comment>
<comment type="similarity">
    <text evidence="1">Belongs to the type-II 3-dehydroquinase family.</text>
</comment>
<keyword id="KW-0028">Amino-acid biosynthesis</keyword>
<keyword id="KW-0057">Aromatic amino acid biosynthesis</keyword>
<keyword id="KW-0456">Lyase</keyword>
<accession>A6T2B3</accession>
<dbReference type="EC" id="4.2.1.10" evidence="1"/>
<dbReference type="EMBL" id="CP000269">
    <property type="protein sequence ID" value="ABR89048.1"/>
    <property type="molecule type" value="Genomic_DNA"/>
</dbReference>
<dbReference type="RefSeq" id="WP_012080819.1">
    <property type="nucleotide sequence ID" value="NC_009659.1"/>
</dbReference>
<dbReference type="SMR" id="A6T2B3"/>
<dbReference type="STRING" id="375286.mma_2970"/>
<dbReference type="KEGG" id="mms:mma_2970"/>
<dbReference type="eggNOG" id="COG0757">
    <property type="taxonomic scope" value="Bacteria"/>
</dbReference>
<dbReference type="HOGENOM" id="CLU_090968_1_0_4"/>
<dbReference type="OrthoDB" id="9790793at2"/>
<dbReference type="UniPathway" id="UPA00053">
    <property type="reaction ID" value="UER00086"/>
</dbReference>
<dbReference type="Proteomes" id="UP000006388">
    <property type="component" value="Chromosome"/>
</dbReference>
<dbReference type="GO" id="GO:0003855">
    <property type="term" value="F:3-dehydroquinate dehydratase activity"/>
    <property type="evidence" value="ECO:0007669"/>
    <property type="project" value="UniProtKB-UniRule"/>
</dbReference>
<dbReference type="GO" id="GO:0008652">
    <property type="term" value="P:amino acid biosynthetic process"/>
    <property type="evidence" value="ECO:0007669"/>
    <property type="project" value="UniProtKB-KW"/>
</dbReference>
<dbReference type="GO" id="GO:0009073">
    <property type="term" value="P:aromatic amino acid family biosynthetic process"/>
    <property type="evidence" value="ECO:0007669"/>
    <property type="project" value="UniProtKB-KW"/>
</dbReference>
<dbReference type="GO" id="GO:0009423">
    <property type="term" value="P:chorismate biosynthetic process"/>
    <property type="evidence" value="ECO:0007669"/>
    <property type="project" value="UniProtKB-UniRule"/>
</dbReference>
<dbReference type="GO" id="GO:0019631">
    <property type="term" value="P:quinate catabolic process"/>
    <property type="evidence" value="ECO:0007669"/>
    <property type="project" value="TreeGrafter"/>
</dbReference>
<dbReference type="CDD" id="cd00466">
    <property type="entry name" value="DHQase_II"/>
    <property type="match status" value="1"/>
</dbReference>
<dbReference type="Gene3D" id="3.40.50.9100">
    <property type="entry name" value="Dehydroquinase, class II"/>
    <property type="match status" value="1"/>
</dbReference>
<dbReference type="HAMAP" id="MF_00169">
    <property type="entry name" value="AroQ"/>
    <property type="match status" value="1"/>
</dbReference>
<dbReference type="InterPro" id="IPR001874">
    <property type="entry name" value="DHquinase_II"/>
</dbReference>
<dbReference type="InterPro" id="IPR018509">
    <property type="entry name" value="DHquinase_II_CS"/>
</dbReference>
<dbReference type="InterPro" id="IPR036441">
    <property type="entry name" value="DHquinase_II_sf"/>
</dbReference>
<dbReference type="NCBIfam" id="TIGR01088">
    <property type="entry name" value="aroQ"/>
    <property type="match status" value="1"/>
</dbReference>
<dbReference type="NCBIfam" id="NF003804">
    <property type="entry name" value="PRK05395.1-1"/>
    <property type="match status" value="1"/>
</dbReference>
<dbReference type="NCBIfam" id="NF003805">
    <property type="entry name" value="PRK05395.1-2"/>
    <property type="match status" value="1"/>
</dbReference>
<dbReference type="NCBIfam" id="NF003806">
    <property type="entry name" value="PRK05395.1-3"/>
    <property type="match status" value="1"/>
</dbReference>
<dbReference type="NCBIfam" id="NF003807">
    <property type="entry name" value="PRK05395.1-4"/>
    <property type="match status" value="1"/>
</dbReference>
<dbReference type="PANTHER" id="PTHR21272">
    <property type="entry name" value="CATABOLIC 3-DEHYDROQUINASE"/>
    <property type="match status" value="1"/>
</dbReference>
<dbReference type="PANTHER" id="PTHR21272:SF3">
    <property type="entry name" value="CATABOLIC 3-DEHYDROQUINASE"/>
    <property type="match status" value="1"/>
</dbReference>
<dbReference type="Pfam" id="PF01220">
    <property type="entry name" value="DHquinase_II"/>
    <property type="match status" value="1"/>
</dbReference>
<dbReference type="PIRSF" id="PIRSF001399">
    <property type="entry name" value="DHquinase_II"/>
    <property type="match status" value="1"/>
</dbReference>
<dbReference type="SUPFAM" id="SSF52304">
    <property type="entry name" value="Type II 3-dehydroquinate dehydratase"/>
    <property type="match status" value="1"/>
</dbReference>
<dbReference type="PROSITE" id="PS01029">
    <property type="entry name" value="DEHYDROQUINASE_II"/>
    <property type="match status" value="1"/>
</dbReference>
<gene>
    <name evidence="1" type="primary">aroQ</name>
    <name type="ordered locus">mma_2970</name>
</gene>